<protein>
    <recommendedName>
        <fullName evidence="1">Ureidoacrylate amidohydrolase RutB</fullName>
        <ecNumber evidence="1">3.5.1.110</ecNumber>
    </recommendedName>
</protein>
<keyword id="KW-0378">Hydrolase</keyword>
<dbReference type="EC" id="3.5.1.110" evidence="1"/>
<dbReference type="EMBL" id="AP009378">
    <property type="protein sequence ID" value="BAI54457.1"/>
    <property type="molecule type" value="Genomic_DNA"/>
</dbReference>
<dbReference type="RefSeq" id="WP_012896765.1">
    <property type="nucleotide sequence ID" value="NC_013654.1"/>
</dbReference>
<dbReference type="SMR" id="D2NGI8"/>
<dbReference type="KEGG" id="ese:ECSF_0917"/>
<dbReference type="PATRIC" id="fig|431946.3.peg.961"/>
<dbReference type="HOGENOM" id="CLU_068979_8_0_6"/>
<dbReference type="GO" id="GO:0016811">
    <property type="term" value="F:hydrolase activity, acting on carbon-nitrogen (but not peptide) bonds, in linear amides"/>
    <property type="evidence" value="ECO:0007669"/>
    <property type="project" value="UniProtKB-UniRule"/>
</dbReference>
<dbReference type="GO" id="GO:0019740">
    <property type="term" value="P:nitrogen utilization"/>
    <property type="evidence" value="ECO:0007669"/>
    <property type="project" value="UniProtKB-UniRule"/>
</dbReference>
<dbReference type="GO" id="GO:0006212">
    <property type="term" value="P:uracil catabolic process"/>
    <property type="evidence" value="ECO:0007669"/>
    <property type="project" value="UniProtKB-UniRule"/>
</dbReference>
<dbReference type="CDD" id="cd00431">
    <property type="entry name" value="cysteine_hydrolases"/>
    <property type="match status" value="1"/>
</dbReference>
<dbReference type="FunFam" id="3.40.50.850:FF:000004">
    <property type="entry name" value="Peroxyureidoacrylate/ureidoacrylate amidohydrolase RutB"/>
    <property type="match status" value="1"/>
</dbReference>
<dbReference type="Gene3D" id="3.40.50.850">
    <property type="entry name" value="Isochorismatase-like"/>
    <property type="match status" value="1"/>
</dbReference>
<dbReference type="HAMAP" id="MF_00830">
    <property type="entry name" value="RutB"/>
    <property type="match status" value="1"/>
</dbReference>
<dbReference type="InterPro" id="IPR000868">
    <property type="entry name" value="Isochorismatase-like_dom"/>
</dbReference>
<dbReference type="InterPro" id="IPR050272">
    <property type="entry name" value="Isochorismatase-like_hydrls"/>
</dbReference>
<dbReference type="InterPro" id="IPR036380">
    <property type="entry name" value="Isochorismatase-like_sf"/>
</dbReference>
<dbReference type="InterPro" id="IPR019916">
    <property type="entry name" value="RutB"/>
</dbReference>
<dbReference type="NCBIfam" id="TIGR03614">
    <property type="entry name" value="RutB"/>
    <property type="match status" value="1"/>
</dbReference>
<dbReference type="PANTHER" id="PTHR43540:SF6">
    <property type="entry name" value="ISOCHORISMATASE-LIKE DOMAIN-CONTAINING PROTEIN"/>
    <property type="match status" value="1"/>
</dbReference>
<dbReference type="PANTHER" id="PTHR43540">
    <property type="entry name" value="PEROXYUREIDOACRYLATE/UREIDOACRYLATE AMIDOHYDROLASE-RELATED"/>
    <property type="match status" value="1"/>
</dbReference>
<dbReference type="Pfam" id="PF00857">
    <property type="entry name" value="Isochorismatase"/>
    <property type="match status" value="1"/>
</dbReference>
<dbReference type="SUPFAM" id="SSF52499">
    <property type="entry name" value="Isochorismatase-like hydrolases"/>
    <property type="match status" value="1"/>
</dbReference>
<reference key="1">
    <citation type="journal article" date="2010" name="J. Bacteriol.">
        <title>Complete genome sequence of the wild-type commensal Escherichia coli strain SE15, belonging to phylogenetic group B2.</title>
        <authorList>
            <person name="Toh H."/>
            <person name="Oshima K."/>
            <person name="Toyoda A."/>
            <person name="Ogura Y."/>
            <person name="Ooka T."/>
            <person name="Sasamoto H."/>
            <person name="Park S.H."/>
            <person name="Iyoda S."/>
            <person name="Kurokawa K."/>
            <person name="Morita H."/>
            <person name="Itoh K."/>
            <person name="Taylor T.D."/>
            <person name="Hayashi T."/>
            <person name="Hattori M."/>
        </authorList>
    </citation>
    <scope>NUCLEOTIDE SEQUENCE [LARGE SCALE GENOMIC DNA]</scope>
    <source>
        <strain>SE15</strain>
    </source>
</reference>
<sequence>MTTLTARPEAITFDPQQSALIVVDMQNAYATPGGYLDLAGFDVSTTRPVIANIQTAVTAARAAGMLIIWFQNGWDEQYVEAGGPGSPNFHKSNALKTMRKQPQLQGKLLAKGSWDYQLVDELVPQPGDIVLPKPRYSGFFNTPLDSILRSRGIRHLVFTGIATNVCVESTLRDGFFLEYFGVVLEDATHQAGPEFAQKAALFNIETFFGWVSDVETFCDALSSTSFARIA</sequence>
<gene>
    <name evidence="1" type="primary">rutB</name>
    <name type="ordered locus">ECSF_0917</name>
</gene>
<organism>
    <name type="scientific">Escherichia coli O150:H5 (strain SE15)</name>
    <dbReference type="NCBI Taxonomy" id="431946"/>
    <lineage>
        <taxon>Bacteria</taxon>
        <taxon>Pseudomonadati</taxon>
        <taxon>Pseudomonadota</taxon>
        <taxon>Gammaproteobacteria</taxon>
        <taxon>Enterobacterales</taxon>
        <taxon>Enterobacteriaceae</taxon>
        <taxon>Escherichia</taxon>
    </lineage>
</organism>
<comment type="function">
    <text evidence="1">Hydrolyzes ureidoacrylate to form aminoacrylate and carbamate. The carbamate hydrolyzes spontaneously, thereby releasing one of the nitrogen atoms of the pyrimidine ring as ammonia and one of its carbon atoms as CO2.</text>
</comment>
<comment type="catalytic activity">
    <reaction evidence="1">
        <text>(Z)-3-ureidoacrylate + H2O + H(+) = (Z)-3-aminoacrylate + NH4(+) + CO2</text>
        <dbReference type="Rhea" id="RHEA:42624"/>
        <dbReference type="ChEBI" id="CHEBI:15377"/>
        <dbReference type="ChEBI" id="CHEBI:15378"/>
        <dbReference type="ChEBI" id="CHEBI:16526"/>
        <dbReference type="ChEBI" id="CHEBI:28938"/>
        <dbReference type="ChEBI" id="CHEBI:59891"/>
        <dbReference type="ChEBI" id="CHEBI:59894"/>
        <dbReference type="EC" id="3.5.1.110"/>
    </reaction>
</comment>
<comment type="catalytic activity">
    <reaction evidence="1">
        <text>(Z)-3-ureidoacrylate + H2O = (Z)-3-aminoacrylate + carbamate + H(+)</text>
        <dbReference type="Rhea" id="RHEA:31603"/>
        <dbReference type="ChEBI" id="CHEBI:13941"/>
        <dbReference type="ChEBI" id="CHEBI:15377"/>
        <dbReference type="ChEBI" id="CHEBI:15378"/>
        <dbReference type="ChEBI" id="CHEBI:59891"/>
        <dbReference type="ChEBI" id="CHEBI:59894"/>
    </reaction>
</comment>
<comment type="catalytic activity">
    <reaction evidence="1">
        <text>(Z)-2-methylureidoacrylate + H2O + H(+) = (Z)-2-methylaminoacrylate + NH4(+) + CO2</text>
        <dbReference type="Rhea" id="RHEA:42620"/>
        <dbReference type="ChEBI" id="CHEBI:15377"/>
        <dbReference type="ChEBI" id="CHEBI:15378"/>
        <dbReference type="ChEBI" id="CHEBI:16526"/>
        <dbReference type="ChEBI" id="CHEBI:28938"/>
        <dbReference type="ChEBI" id="CHEBI:143783"/>
        <dbReference type="ChEBI" id="CHEBI:145735"/>
        <dbReference type="EC" id="3.5.1.110"/>
    </reaction>
</comment>
<comment type="induction">
    <text evidence="1">Up-regulated by the nitrogen regulatory protein C (NtrC also called GlnG) and repressed by RutR.</text>
</comment>
<comment type="similarity">
    <text evidence="1">Belongs to the isochorismatase family. RutB subfamily.</text>
</comment>
<feature type="chain" id="PRO_0000402671" description="Ureidoacrylate amidohydrolase RutB">
    <location>
        <begin position="1"/>
        <end position="230"/>
    </location>
</feature>
<feature type="active site" description="Proton acceptor" evidence="1">
    <location>
        <position position="24"/>
    </location>
</feature>
<feature type="active site" evidence="1">
    <location>
        <position position="133"/>
    </location>
</feature>
<feature type="active site" description="Nucleophile" evidence="1">
    <location>
        <position position="166"/>
    </location>
</feature>
<accession>D2NGI8</accession>
<evidence type="ECO:0000255" key="1">
    <source>
        <dbReference type="HAMAP-Rule" id="MF_00830"/>
    </source>
</evidence>
<name>RUTB_ECOS5</name>
<proteinExistence type="inferred from homology"/>